<evidence type="ECO:0000305" key="1"/>
<feature type="chain" id="PRO_0000077617" description="Protein ninE">
    <location>
        <begin position="1"/>
        <end position="56"/>
    </location>
</feature>
<protein>
    <recommendedName>
        <fullName>Protein ninE</fullName>
    </recommendedName>
</protein>
<name>NINE_BP82</name>
<proteinExistence type="inferred from homology"/>
<accession>Q37871</accession>
<sequence>MATPLIRVMNGHIYKVPNRRKRKPELKPSEIPTLLGYTASLVDKKWLRLAARRNHG</sequence>
<organism>
    <name type="scientific">Enterobacteria phage 82</name>
    <name type="common">Bacteriophage 82</name>
    <dbReference type="NCBI Taxonomy" id="10705"/>
    <lineage>
        <taxon>Viruses</taxon>
        <taxon>Duplodnaviria</taxon>
        <taxon>Heunggongvirae</taxon>
        <taxon>Uroviricota</taxon>
        <taxon>Caudoviricetes</taxon>
        <taxon>Lambdavirus</taxon>
    </lineage>
</organism>
<organismHost>
    <name type="scientific">Escherichia coli</name>
    <dbReference type="NCBI Taxonomy" id="562"/>
</organismHost>
<reference key="1">
    <citation type="journal article" date="1996" name="J. Mol. Biol.">
        <title>Holliday junction resolvases encoded by homologous rusA genes in Escherichia coli K-12 and phage 82.</title>
        <authorList>
            <person name="Mahdi A.A."/>
            <person name="Sharples G.J."/>
            <person name="Mandal T.N."/>
            <person name="Lloyd R.G."/>
        </authorList>
    </citation>
    <scope>NUCLEOTIDE SEQUENCE [GENOMIC DNA]</scope>
</reference>
<comment type="similarity">
    <text evidence="1">Belongs to the ninE family.</text>
</comment>
<gene>
    <name type="primary">ninE</name>
</gene>
<dbReference type="EMBL" id="X92588">
    <property type="protein sequence ID" value="CAA63328.1"/>
    <property type="molecule type" value="Genomic_DNA"/>
</dbReference>
<dbReference type="PIR" id="S66581">
    <property type="entry name" value="S66581"/>
</dbReference>
<dbReference type="NCBIfam" id="NF007245">
    <property type="entry name" value="PRK09689.1"/>
    <property type="match status" value="1"/>
</dbReference>